<sequence>MKSWTSRPVPELPGSMPQLRLYDTALGRVVDVERQPEQSMYVCGITPYDATHMGHAASYVAFDLLNRAWRDAGVRVSYVQNVTDIDDPLLERATATGVDWRELAQSQIDLFQTDMDALNVLAPNHYIGAVEAIPDIVPAIEQLIADGVAYRVAGSEGEPDGDVYYDVETAGKRSDATDAWTLGDVSGLGEKEMLELFAERGGDPTRAGKRHALDPLLWRVARDGEPSWPGSTLGDGRPGWHIECTVIAQKYLPAPFTVQGGGSDLVFPHHEMGAGHAYSLSGVPLARHYSHAGMVGLDGEKMSKSKGNLVLVSKLRAAGEEPAAIRLAILAHHYRSDWSWTDAEFAEAKDRLKQWRAALDHAPAGSAAALISAMRDELANDLNAPGAIAAVDHWAAEAIRSGSDKSEQDTALVTDAIDALLGVEL</sequence>
<evidence type="ECO:0000255" key="1">
    <source>
        <dbReference type="HAMAP-Rule" id="MF_01697"/>
    </source>
</evidence>
<keyword id="KW-0067">ATP-binding</keyword>
<keyword id="KW-0436">Ligase</keyword>
<keyword id="KW-0479">Metal-binding</keyword>
<keyword id="KW-0547">Nucleotide-binding</keyword>
<keyword id="KW-0862">Zinc</keyword>
<gene>
    <name evidence="1" type="primary">mshC</name>
    <name type="ordered locus">AAur_2169</name>
</gene>
<name>MSHC_PAEAT</name>
<dbReference type="EC" id="6.3.1.13" evidence="1"/>
<dbReference type="EMBL" id="CP000474">
    <property type="protein sequence ID" value="ABM09780.1"/>
    <property type="molecule type" value="Genomic_DNA"/>
</dbReference>
<dbReference type="RefSeq" id="WP_011774855.1">
    <property type="nucleotide sequence ID" value="NC_008711.1"/>
</dbReference>
<dbReference type="SMR" id="A1R6P9"/>
<dbReference type="STRING" id="290340.AAur_2169"/>
<dbReference type="KEGG" id="aau:AAur_2169"/>
<dbReference type="eggNOG" id="COG0215">
    <property type="taxonomic scope" value="Bacteria"/>
</dbReference>
<dbReference type="HOGENOM" id="CLU_013528_0_0_11"/>
<dbReference type="OrthoDB" id="9815130at2"/>
<dbReference type="Proteomes" id="UP000000637">
    <property type="component" value="Chromosome"/>
</dbReference>
<dbReference type="GO" id="GO:0005829">
    <property type="term" value="C:cytosol"/>
    <property type="evidence" value="ECO:0007669"/>
    <property type="project" value="TreeGrafter"/>
</dbReference>
<dbReference type="GO" id="GO:0005524">
    <property type="term" value="F:ATP binding"/>
    <property type="evidence" value="ECO:0007669"/>
    <property type="project" value="UniProtKB-KW"/>
</dbReference>
<dbReference type="GO" id="GO:0035446">
    <property type="term" value="F:cysteine-glucosaminylinositol ligase activity"/>
    <property type="evidence" value="ECO:0007669"/>
    <property type="project" value="UniProtKB-UniRule"/>
</dbReference>
<dbReference type="GO" id="GO:0004817">
    <property type="term" value="F:cysteine-tRNA ligase activity"/>
    <property type="evidence" value="ECO:0007669"/>
    <property type="project" value="TreeGrafter"/>
</dbReference>
<dbReference type="GO" id="GO:0008270">
    <property type="term" value="F:zinc ion binding"/>
    <property type="evidence" value="ECO:0007669"/>
    <property type="project" value="UniProtKB-UniRule"/>
</dbReference>
<dbReference type="GO" id="GO:0006423">
    <property type="term" value="P:cysteinyl-tRNA aminoacylation"/>
    <property type="evidence" value="ECO:0007669"/>
    <property type="project" value="TreeGrafter"/>
</dbReference>
<dbReference type="GO" id="GO:0010125">
    <property type="term" value="P:mycothiol biosynthetic process"/>
    <property type="evidence" value="ECO:0007669"/>
    <property type="project" value="UniProtKB-UniRule"/>
</dbReference>
<dbReference type="Gene3D" id="1.20.120.640">
    <property type="entry name" value="Anticodon-binding domain of a subclass of class I aminoacyl-tRNA synthetases"/>
    <property type="match status" value="1"/>
</dbReference>
<dbReference type="Gene3D" id="3.40.50.620">
    <property type="entry name" value="HUPs"/>
    <property type="match status" value="1"/>
</dbReference>
<dbReference type="HAMAP" id="MF_01697">
    <property type="entry name" value="MshC"/>
    <property type="match status" value="1"/>
</dbReference>
<dbReference type="InterPro" id="IPR024909">
    <property type="entry name" value="Cys-tRNA/MSH_ligase"/>
</dbReference>
<dbReference type="InterPro" id="IPR017812">
    <property type="entry name" value="Mycothiol_ligase_MshC"/>
</dbReference>
<dbReference type="InterPro" id="IPR014729">
    <property type="entry name" value="Rossmann-like_a/b/a_fold"/>
</dbReference>
<dbReference type="InterPro" id="IPR032678">
    <property type="entry name" value="tRNA-synt_1_cat_dom"/>
</dbReference>
<dbReference type="NCBIfam" id="TIGR03447">
    <property type="entry name" value="mycothiol_MshC"/>
    <property type="match status" value="1"/>
</dbReference>
<dbReference type="PANTHER" id="PTHR10890:SF3">
    <property type="entry name" value="CYSTEINE--TRNA LIGASE, CYTOPLASMIC"/>
    <property type="match status" value="1"/>
</dbReference>
<dbReference type="PANTHER" id="PTHR10890">
    <property type="entry name" value="CYSTEINYL-TRNA SYNTHETASE"/>
    <property type="match status" value="1"/>
</dbReference>
<dbReference type="Pfam" id="PF01406">
    <property type="entry name" value="tRNA-synt_1e"/>
    <property type="match status" value="1"/>
</dbReference>
<dbReference type="PRINTS" id="PR00983">
    <property type="entry name" value="TRNASYNTHCYS"/>
</dbReference>
<dbReference type="SUPFAM" id="SSF52374">
    <property type="entry name" value="Nucleotidylyl transferase"/>
    <property type="match status" value="1"/>
</dbReference>
<comment type="function">
    <text evidence="1">Catalyzes the ATP-dependent condensation of GlcN-Ins and L-cysteine to form L-Cys-GlcN-Ins.</text>
</comment>
<comment type="catalytic activity">
    <reaction evidence="1">
        <text>1D-myo-inositol 2-amino-2-deoxy-alpha-D-glucopyranoside + L-cysteine + ATP = 1D-myo-inositol 2-(L-cysteinylamino)-2-deoxy-alpha-D-glucopyranoside + AMP + diphosphate + H(+)</text>
        <dbReference type="Rhea" id="RHEA:26176"/>
        <dbReference type="ChEBI" id="CHEBI:15378"/>
        <dbReference type="ChEBI" id="CHEBI:30616"/>
        <dbReference type="ChEBI" id="CHEBI:33019"/>
        <dbReference type="ChEBI" id="CHEBI:35235"/>
        <dbReference type="ChEBI" id="CHEBI:58886"/>
        <dbReference type="ChEBI" id="CHEBI:58887"/>
        <dbReference type="ChEBI" id="CHEBI:456215"/>
        <dbReference type="EC" id="6.3.1.13"/>
    </reaction>
</comment>
<comment type="cofactor">
    <cofactor evidence="1">
        <name>Zn(2+)</name>
        <dbReference type="ChEBI" id="CHEBI:29105"/>
    </cofactor>
    <text evidence="1">Binds 1 zinc ion per subunit.</text>
</comment>
<comment type="subunit">
    <text evidence="1">Monomer.</text>
</comment>
<comment type="similarity">
    <text evidence="1">Belongs to the class-I aminoacyl-tRNA synthetase family. MshC subfamily.</text>
</comment>
<accession>A1R6P9</accession>
<feature type="chain" id="PRO_0000400428" description="L-cysteine:1D-myo-inositol 2-amino-2-deoxy-alpha-D-glucopyranoside ligase">
    <location>
        <begin position="1"/>
        <end position="425"/>
    </location>
</feature>
<feature type="short sequence motif" description="'HIGH' region" evidence="1">
    <location>
        <begin position="45"/>
        <end position="55"/>
    </location>
</feature>
<feature type="short sequence motif" description="'ERGGDP' region" evidence="1">
    <location>
        <begin position="199"/>
        <end position="204"/>
    </location>
</feature>
<feature type="short sequence motif" description="'KMSKS' region" evidence="1">
    <location>
        <begin position="301"/>
        <end position="305"/>
    </location>
</feature>
<feature type="binding site" evidence="1">
    <location>
        <begin position="43"/>
        <end position="46"/>
    </location>
    <ligand>
        <name>L-cysteinyl-5'-AMP</name>
        <dbReference type="ChEBI" id="CHEBI:144924"/>
    </ligand>
</feature>
<feature type="binding site" evidence="1">
    <location>
        <position position="43"/>
    </location>
    <ligand>
        <name>Zn(2+)</name>
        <dbReference type="ChEBI" id="CHEBI:29105"/>
    </ligand>
</feature>
<feature type="binding site" evidence="1">
    <location>
        <position position="58"/>
    </location>
    <ligand>
        <name>L-cysteinyl-5'-AMP</name>
        <dbReference type="ChEBI" id="CHEBI:144924"/>
    </ligand>
</feature>
<feature type="binding site" evidence="1">
    <location>
        <begin position="81"/>
        <end position="83"/>
    </location>
    <ligand>
        <name>L-cysteinyl-5'-AMP</name>
        <dbReference type="ChEBI" id="CHEBI:144924"/>
    </ligand>
</feature>
<feature type="binding site" evidence="1">
    <location>
        <position position="240"/>
    </location>
    <ligand>
        <name>L-cysteinyl-5'-AMP</name>
        <dbReference type="ChEBI" id="CHEBI:144924"/>
    </ligand>
</feature>
<feature type="binding site" evidence="1">
    <location>
        <position position="244"/>
    </location>
    <ligand>
        <name>Zn(2+)</name>
        <dbReference type="ChEBI" id="CHEBI:29105"/>
    </ligand>
</feature>
<feature type="binding site" evidence="1">
    <location>
        <begin position="262"/>
        <end position="264"/>
    </location>
    <ligand>
        <name>L-cysteinyl-5'-AMP</name>
        <dbReference type="ChEBI" id="CHEBI:144924"/>
    </ligand>
</feature>
<feature type="binding site" evidence="1">
    <location>
        <position position="269"/>
    </location>
    <ligand>
        <name>Zn(2+)</name>
        <dbReference type="ChEBI" id="CHEBI:29105"/>
    </ligand>
</feature>
<feature type="binding site" evidence="1">
    <location>
        <position position="295"/>
    </location>
    <ligand>
        <name>L-cysteinyl-5'-AMP</name>
        <dbReference type="ChEBI" id="CHEBI:144924"/>
    </ligand>
</feature>
<proteinExistence type="inferred from homology"/>
<reference key="1">
    <citation type="journal article" date="2006" name="PLoS Genet.">
        <title>Secrets of soil survival revealed by the genome sequence of Arthrobacter aurescens TC1.</title>
        <authorList>
            <person name="Mongodin E.F."/>
            <person name="Shapir N."/>
            <person name="Daugherty S.C."/>
            <person name="DeBoy R.T."/>
            <person name="Emerson J.B."/>
            <person name="Shvartzbeyn A."/>
            <person name="Radune D."/>
            <person name="Vamathevan J."/>
            <person name="Riggs F."/>
            <person name="Grinberg V."/>
            <person name="Khouri H.M."/>
            <person name="Wackett L.P."/>
            <person name="Nelson K.E."/>
            <person name="Sadowsky M.J."/>
        </authorList>
    </citation>
    <scope>NUCLEOTIDE SEQUENCE [LARGE SCALE GENOMIC DNA]</scope>
    <source>
        <strain>TC1</strain>
    </source>
</reference>
<organism>
    <name type="scientific">Paenarthrobacter aurescens (strain TC1)</name>
    <dbReference type="NCBI Taxonomy" id="290340"/>
    <lineage>
        <taxon>Bacteria</taxon>
        <taxon>Bacillati</taxon>
        <taxon>Actinomycetota</taxon>
        <taxon>Actinomycetes</taxon>
        <taxon>Micrococcales</taxon>
        <taxon>Micrococcaceae</taxon>
        <taxon>Paenarthrobacter</taxon>
    </lineage>
</organism>
<protein>
    <recommendedName>
        <fullName evidence="1">L-cysteine:1D-myo-inositol 2-amino-2-deoxy-alpha-D-glucopyranoside ligase</fullName>
        <shortName evidence="1">L-Cys:GlcN-Ins ligase</shortName>
        <ecNumber evidence="1">6.3.1.13</ecNumber>
    </recommendedName>
    <alternativeName>
        <fullName evidence="1">Mycothiol ligase</fullName>
        <shortName evidence="1">MSH ligase</shortName>
    </alternativeName>
</protein>